<name>Y1176_PASMU</name>
<feature type="signal peptide" evidence="1">
    <location>
        <begin position="1"/>
        <end position="18"/>
    </location>
</feature>
<feature type="chain" id="PRO_0000014181" description="Uncharacterized lipoprotein PM1176">
    <location>
        <begin position="19"/>
        <end position="124"/>
    </location>
</feature>
<feature type="lipid moiety-binding region" description="N-palmitoyl cysteine" evidence="1">
    <location>
        <position position="19"/>
    </location>
</feature>
<feature type="lipid moiety-binding region" description="S-diacylglycerol cysteine" evidence="1">
    <location>
        <position position="19"/>
    </location>
</feature>
<proteinExistence type="inferred from homology"/>
<keyword id="KW-1003">Cell membrane</keyword>
<keyword id="KW-0449">Lipoprotein</keyword>
<keyword id="KW-0472">Membrane</keyword>
<keyword id="KW-0564">Palmitate</keyword>
<keyword id="KW-1185">Reference proteome</keyword>
<keyword id="KW-0732">Signal</keyword>
<organism>
    <name type="scientific">Pasteurella multocida (strain Pm70)</name>
    <dbReference type="NCBI Taxonomy" id="272843"/>
    <lineage>
        <taxon>Bacteria</taxon>
        <taxon>Pseudomonadati</taxon>
        <taxon>Pseudomonadota</taxon>
        <taxon>Gammaproteobacteria</taxon>
        <taxon>Pasteurellales</taxon>
        <taxon>Pasteurellaceae</taxon>
        <taxon>Pasteurella</taxon>
    </lineage>
</organism>
<comment type="subcellular location">
    <subcellularLocation>
        <location evidence="1">Cell membrane</location>
        <topology evidence="1">Lipid-anchor</topology>
    </subcellularLocation>
</comment>
<accession>Q9CLP1</accession>
<reference key="1">
    <citation type="journal article" date="2001" name="Proc. Natl. Acad. Sci. U.S.A.">
        <title>Complete genomic sequence of Pasteurella multocida Pm70.</title>
        <authorList>
            <person name="May B.J."/>
            <person name="Zhang Q."/>
            <person name="Li L.L."/>
            <person name="Paustian M.L."/>
            <person name="Whittam T.S."/>
            <person name="Kapur V."/>
        </authorList>
    </citation>
    <scope>NUCLEOTIDE SEQUENCE [LARGE SCALE GENOMIC DNA]</scope>
    <source>
        <strain>Pm70</strain>
    </source>
</reference>
<dbReference type="EMBL" id="AE004439">
    <property type="protein sequence ID" value="AAK03260.1"/>
    <property type="molecule type" value="Genomic_DNA"/>
</dbReference>
<dbReference type="RefSeq" id="WP_010907057.1">
    <property type="nucleotide sequence ID" value="NC_002663.1"/>
</dbReference>
<dbReference type="EnsemblBacteria" id="AAK03260">
    <property type="protein sequence ID" value="AAK03260"/>
    <property type="gene ID" value="PM1176"/>
</dbReference>
<dbReference type="KEGG" id="pmu:PM1176"/>
<dbReference type="PATRIC" id="fig|272843.6.peg.1187"/>
<dbReference type="HOGENOM" id="CLU_1990519_0_0_6"/>
<dbReference type="OrthoDB" id="9181784at2"/>
<dbReference type="Proteomes" id="UP000000809">
    <property type="component" value="Chromosome"/>
</dbReference>
<dbReference type="GO" id="GO:0005886">
    <property type="term" value="C:plasma membrane"/>
    <property type="evidence" value="ECO:0007669"/>
    <property type="project" value="UniProtKB-SubCell"/>
</dbReference>
<dbReference type="Gene3D" id="2.40.128.200">
    <property type="match status" value="1"/>
</dbReference>
<dbReference type="InterPro" id="IPR018660">
    <property type="entry name" value="MliC"/>
</dbReference>
<dbReference type="InterPro" id="IPR036328">
    <property type="entry name" value="MliC_sf"/>
</dbReference>
<dbReference type="Pfam" id="PF09864">
    <property type="entry name" value="MliC"/>
    <property type="match status" value="1"/>
</dbReference>
<dbReference type="SUPFAM" id="SSF141488">
    <property type="entry name" value="YdhA-like"/>
    <property type="match status" value="1"/>
</dbReference>
<dbReference type="PROSITE" id="PS51257">
    <property type="entry name" value="PROKAR_LIPOPROTEIN"/>
    <property type="match status" value="1"/>
</dbReference>
<sequence>MHIIKTLISVGVAFSLSACLSLEGVEIAGLEGKSSGTLTKYRCENGYKASIKQRDNGVVSIAFNDGKDSYVSYLNHVPSASGTLYVNDKNTLKWHQKNNIAVFTYPDRNYAKTGQLVTTNCHKY</sequence>
<gene>
    <name type="ordered locus">PM1176</name>
</gene>
<protein>
    <recommendedName>
        <fullName>Uncharacterized lipoprotein PM1176</fullName>
    </recommendedName>
</protein>
<evidence type="ECO:0000255" key="1">
    <source>
        <dbReference type="PROSITE-ProRule" id="PRU00303"/>
    </source>
</evidence>